<name>CHEZ_ECO5T</name>
<gene>
    <name type="primary">cheZ</name>
    <name type="ordered locus">ECSP_2455</name>
</gene>
<reference key="1">
    <citation type="journal article" date="2009" name="Infect. Immun.">
        <title>Analysis of the genome of the Escherichia coli O157:H7 2006 spinach-associated outbreak isolate indicates candidate genes that may enhance virulence.</title>
        <authorList>
            <person name="Kulasekara B.R."/>
            <person name="Jacobs M."/>
            <person name="Zhou Y."/>
            <person name="Wu Z."/>
            <person name="Sims E."/>
            <person name="Saenphimmachak C."/>
            <person name="Rohmer L."/>
            <person name="Ritchie J.M."/>
            <person name="Radey M."/>
            <person name="McKevitt M."/>
            <person name="Freeman T.L."/>
            <person name="Hayden H."/>
            <person name="Haugen E."/>
            <person name="Gillett W."/>
            <person name="Fong C."/>
            <person name="Chang J."/>
            <person name="Beskhlebnaya V."/>
            <person name="Waldor M.K."/>
            <person name="Samadpour M."/>
            <person name="Whittam T.S."/>
            <person name="Kaul R."/>
            <person name="Brittnacher M."/>
            <person name="Miller S.I."/>
        </authorList>
    </citation>
    <scope>NUCLEOTIDE SEQUENCE [LARGE SCALE GENOMIC DNA]</scope>
    <source>
        <strain>TW14359 / EHEC</strain>
    </source>
</reference>
<feature type="chain" id="PRO_0000410777" description="Protein phosphatase CheZ">
    <location>
        <begin position="1"/>
        <end position="214"/>
    </location>
</feature>
<feature type="region of interest" description="Disordered" evidence="2">
    <location>
        <begin position="174"/>
        <end position="199"/>
    </location>
</feature>
<feature type="compositionally biased region" description="Polar residues" evidence="2">
    <location>
        <begin position="183"/>
        <end position="193"/>
    </location>
</feature>
<feature type="site" description="Enhances dephosphorylation of CheY-P" evidence="1">
    <location>
        <position position="147"/>
    </location>
</feature>
<dbReference type="EC" id="3.1.3.-"/>
<dbReference type="EMBL" id="CP001368">
    <property type="protein sequence ID" value="ACT72266.1"/>
    <property type="molecule type" value="Genomic_DNA"/>
</dbReference>
<dbReference type="RefSeq" id="WP_000983602.1">
    <property type="nucleotide sequence ID" value="NC_013008.1"/>
</dbReference>
<dbReference type="SMR" id="C6UY58"/>
<dbReference type="KEGG" id="etw:ECSP_2455"/>
<dbReference type="HOGENOM" id="CLU_080718_1_0_6"/>
<dbReference type="GO" id="GO:0009288">
    <property type="term" value="C:bacterial-type flagellum"/>
    <property type="evidence" value="ECO:0007669"/>
    <property type="project" value="InterPro"/>
</dbReference>
<dbReference type="GO" id="GO:0005737">
    <property type="term" value="C:cytoplasm"/>
    <property type="evidence" value="ECO:0007669"/>
    <property type="project" value="UniProtKB-SubCell"/>
</dbReference>
<dbReference type="GO" id="GO:0004721">
    <property type="term" value="F:phosphoprotein phosphatase activity"/>
    <property type="evidence" value="ECO:0007669"/>
    <property type="project" value="UniProtKB-KW"/>
</dbReference>
<dbReference type="GO" id="GO:0097588">
    <property type="term" value="P:archaeal or bacterial-type flagellum-dependent cell motility"/>
    <property type="evidence" value="ECO:0007669"/>
    <property type="project" value="UniProtKB-KW"/>
</dbReference>
<dbReference type="GO" id="GO:0006935">
    <property type="term" value="P:chemotaxis"/>
    <property type="evidence" value="ECO:0007669"/>
    <property type="project" value="UniProtKB-KW"/>
</dbReference>
<dbReference type="GO" id="GO:0050920">
    <property type="term" value="P:regulation of chemotaxis"/>
    <property type="evidence" value="ECO:0007669"/>
    <property type="project" value="InterPro"/>
</dbReference>
<dbReference type="FunFam" id="1.10.287.500:FF:000001">
    <property type="entry name" value="Protein phosphatase CheZ"/>
    <property type="match status" value="1"/>
</dbReference>
<dbReference type="Gene3D" id="1.10.287.500">
    <property type="entry name" value="Helix hairpin bin"/>
    <property type="match status" value="1"/>
</dbReference>
<dbReference type="Gene3D" id="1.20.5.590">
    <property type="entry name" value="Single helix bin"/>
    <property type="match status" value="1"/>
</dbReference>
<dbReference type="InterPro" id="IPR007439">
    <property type="entry name" value="Chemotax_Pase_CheZ"/>
</dbReference>
<dbReference type="InterPro" id="IPR050992">
    <property type="entry name" value="CheZ_family_phosphatases"/>
</dbReference>
<dbReference type="NCBIfam" id="NF008368">
    <property type="entry name" value="PRK11166.1"/>
    <property type="match status" value="1"/>
</dbReference>
<dbReference type="PANTHER" id="PTHR43693">
    <property type="entry name" value="PROTEIN PHOSPHATASE CHEZ"/>
    <property type="match status" value="1"/>
</dbReference>
<dbReference type="PANTHER" id="PTHR43693:SF1">
    <property type="entry name" value="PROTEIN PHOSPHATASE CHEZ"/>
    <property type="match status" value="1"/>
</dbReference>
<dbReference type="Pfam" id="PF04344">
    <property type="entry name" value="CheZ"/>
    <property type="match status" value="1"/>
</dbReference>
<dbReference type="PIRSF" id="PIRSF002884">
    <property type="entry name" value="CheZ"/>
    <property type="match status" value="1"/>
</dbReference>
<dbReference type="SUPFAM" id="SSF75708">
    <property type="entry name" value="Chemotaxis phosphatase CheZ"/>
    <property type="match status" value="1"/>
</dbReference>
<proteinExistence type="inferred from homology"/>
<comment type="function">
    <text evidence="1">Plays an important role in bacterial chemotaxis signal transduction pathway by accelerating the dephosphorylation of phosphorylated CheY (CheY-P).</text>
</comment>
<comment type="subunit">
    <text evidence="1">Homodimer.</text>
</comment>
<comment type="subcellular location">
    <subcellularLocation>
        <location evidence="1">Cytoplasm</location>
    </subcellularLocation>
</comment>
<comment type="similarity">
    <text evidence="3">Belongs to the CheZ family.</text>
</comment>
<keyword id="KW-0145">Chemotaxis</keyword>
<keyword id="KW-0963">Cytoplasm</keyword>
<keyword id="KW-0283">Flagellar rotation</keyword>
<keyword id="KW-0378">Hydrolase</keyword>
<keyword id="KW-0904">Protein phosphatase</keyword>
<evidence type="ECO:0000250" key="1"/>
<evidence type="ECO:0000256" key="2">
    <source>
        <dbReference type="SAM" id="MobiDB-lite"/>
    </source>
</evidence>
<evidence type="ECO:0000305" key="3"/>
<organism>
    <name type="scientific">Escherichia coli O157:H7 (strain TW14359 / EHEC)</name>
    <dbReference type="NCBI Taxonomy" id="544404"/>
    <lineage>
        <taxon>Bacteria</taxon>
        <taxon>Pseudomonadati</taxon>
        <taxon>Pseudomonadota</taxon>
        <taxon>Gammaproteobacteria</taxon>
        <taxon>Enterobacterales</taxon>
        <taxon>Enterobacteriaceae</taxon>
        <taxon>Escherichia</taxon>
    </lineage>
</organism>
<sequence>MMQPSIKPADEHSAGDIIARIGSLTRMLRDSLRELGLDQAIAEAAEAIPDARDRLYYVVQMTAQAAERALNSVEASQPHQDQMEKSAKALTQRWDDWFADPIDLADARELVTDTRKFLADVPAHTSFTNAQLLEIMMAQDFQDLTGQVIKRMMDVIQEIERQLLMVLLENIPEQESRPKRENQSLLNGPQVDTSKAGVVASQDQVDDLLDSLGF</sequence>
<accession>C6UY58</accession>
<protein>
    <recommendedName>
        <fullName>Protein phosphatase CheZ</fullName>
        <ecNumber>3.1.3.-</ecNumber>
    </recommendedName>
    <alternativeName>
        <fullName>Chemotaxis protein CheZ</fullName>
    </alternativeName>
</protein>